<protein>
    <recommendedName>
        <fullName>Host range factor p28</fullName>
        <ecNumber>2.3.2.27</ecNumber>
    </recommendedName>
    <alternativeName>
        <fullName>E3 ubiquitin-protein ligase p28</fullName>
    </alternativeName>
    <alternativeName>
        <fullName>Protein C7R</fullName>
    </alternativeName>
</protein>
<accession>P87607</accession>
<reference key="1">
    <citation type="journal article" date="1998" name="Virology">
        <title>The genomic sequence analysis of the left and right species-specific terminal region of a cowpox virus strain reveals unique sequences and a cluster of intact ORFs for immunomodulatory and host range proteins.</title>
        <authorList>
            <person name="Shchelkunov S.N."/>
            <person name="Safronov P.F."/>
            <person name="Totmenin A.V."/>
            <person name="Petrov N.A."/>
            <person name="Ryazankina O.I."/>
            <person name="Gutorov V.V."/>
            <person name="Kotwal G.J."/>
        </authorList>
    </citation>
    <scope>NUCLEOTIDE SEQUENCE [GENOMIC DNA]</scope>
</reference>
<reference key="2">
    <citation type="submission" date="2003-03" db="EMBL/GenBank/DDBJ databases">
        <title>Structure-function and organization of cowpox virus strain GRI-90 complete genome.</title>
        <authorList>
            <person name="Shchelkunov S.N."/>
            <person name="Safronov P.F."/>
            <person name="Totmenin A.V."/>
            <person name="Miheev M.V."/>
            <person name="Ryazankina O.I."/>
            <person name="Petrov N.A."/>
            <person name="Gutorov V.V."/>
            <person name="Kotwal G.J."/>
            <person name="Sandakhchiev L.S."/>
        </authorList>
    </citation>
    <scope>NUCLEOTIDE SEQUENCE [GENOMIC DNA]</scope>
    <source>
        <strain>GRI-90</strain>
    </source>
</reference>
<evidence type="ECO:0000250" key="1">
    <source>
        <dbReference type="UniProtKB" id="Q85318"/>
    </source>
</evidence>
<evidence type="ECO:0000255" key="2">
    <source>
        <dbReference type="PROSITE-ProRule" id="PRU00175"/>
    </source>
</evidence>
<evidence type="ECO:0000255" key="3">
    <source>
        <dbReference type="PROSITE-ProRule" id="PRU00631"/>
    </source>
</evidence>
<evidence type="ECO:0000305" key="4"/>
<name>PG021_CWPXG</name>
<organismHost>
    <name type="scientific">Bos taurus</name>
    <name type="common">Bovine</name>
    <dbReference type="NCBI Taxonomy" id="9913"/>
</organismHost>
<organismHost>
    <name type="scientific">Felis catus</name>
    <name type="common">Cat</name>
    <name type="synonym">Felis silvestris catus</name>
    <dbReference type="NCBI Taxonomy" id="9685"/>
</organismHost>
<organismHost>
    <name type="scientific">Homo sapiens</name>
    <name type="common">Human</name>
    <dbReference type="NCBI Taxonomy" id="9606"/>
</organismHost>
<organismHost>
    <name type="scientific">Loxodonta africana</name>
    <name type="common">African elephant</name>
    <dbReference type="NCBI Taxonomy" id="9785"/>
</organismHost>
<organismHost>
    <name type="scientific">Microtus agrestis</name>
    <name type="common">Short-tailed field vole</name>
    <dbReference type="NCBI Taxonomy" id="29092"/>
</organismHost>
<organismHost>
    <name type="scientific">Mus musculus</name>
    <name type="common">Mouse</name>
    <dbReference type="NCBI Taxonomy" id="10090"/>
</organismHost>
<organismHost>
    <name type="scientific">Myodes glareolus</name>
    <name type="common">Bank vole</name>
    <name type="synonym">Clethrionomys glareolus</name>
    <dbReference type="NCBI Taxonomy" id="447135"/>
</organismHost>
<comment type="function">
    <text evidence="1">RING-finger E3 ubiquitin ligase which catalyzes the formation of both 'Lys-48'- and 'Lys-63'-linked polyubiquitin chains. Plays an important role in virulence by acting as an anti-apoptotic factor.</text>
</comment>
<comment type="catalytic activity">
    <reaction>
        <text>S-ubiquitinyl-[E2 ubiquitin-conjugating enzyme]-L-cysteine + [acceptor protein]-L-lysine = [E2 ubiquitin-conjugating enzyme]-L-cysteine + N(6)-ubiquitinyl-[acceptor protein]-L-lysine.</text>
        <dbReference type="EC" id="2.3.2.27"/>
    </reaction>
</comment>
<comment type="subcellular location">
    <subcellularLocation>
        <location>Host cytoplasm</location>
    </subcellularLocation>
    <text evidence="1">Localizes to viral factories, the sites of virus replication.</text>
</comment>
<comment type="domain">
    <text evidence="1">The RING-type zinc finger domain is required for E3 ligase activity.</text>
</comment>
<comment type="similarity">
    <text evidence="4">Belongs to the orthopoxvirus OPG021 family.</text>
</comment>
<keyword id="KW-1035">Host cytoplasm</keyword>
<keyword id="KW-0945">Host-virus interaction</keyword>
<keyword id="KW-0479">Metal-binding</keyword>
<keyword id="KW-1119">Modulation of host cell apoptosis by virus</keyword>
<keyword id="KW-1128">Modulation of host ubiquitin pathway by viral E3 ligase</keyword>
<keyword id="KW-1130">Modulation of host ubiquitin pathway by virus</keyword>
<keyword id="KW-0808">Transferase</keyword>
<keyword id="KW-0833">Ubl conjugation pathway</keyword>
<keyword id="KW-0862">Zinc</keyword>
<keyword id="KW-0863">Zinc-finger</keyword>
<feature type="chain" id="PRO_0000395987" description="Host range factor p28">
    <location>
        <begin position="1"/>
        <end position="242"/>
    </location>
</feature>
<feature type="domain" description="KilA-N" evidence="3">
    <location>
        <begin position="21"/>
        <end position="131"/>
    </location>
</feature>
<feature type="zinc finger region" description="RING-type" evidence="2">
    <location>
        <begin position="173"/>
        <end position="226"/>
    </location>
</feature>
<organism>
    <name type="scientific">Cowpox virus (strain GRI-90 / Grishak)</name>
    <name type="common">CPV</name>
    <dbReference type="NCBI Taxonomy" id="265871"/>
    <lineage>
        <taxon>Viruses</taxon>
        <taxon>Varidnaviria</taxon>
        <taxon>Bamfordvirae</taxon>
        <taxon>Nucleocytoviricota</taxon>
        <taxon>Pokkesviricetes</taxon>
        <taxon>Chitovirales</taxon>
        <taxon>Poxviridae</taxon>
        <taxon>Chordopoxvirinae</taxon>
        <taxon>Orthopoxvirus</taxon>
        <taxon>Cowpox virus</taxon>
    </lineage>
</organism>
<dbReference type="EC" id="2.3.2.27"/>
<dbReference type="EMBL" id="X94355">
    <property type="protein sequence ID" value="CAA64092.1"/>
    <property type="molecule type" value="Genomic_DNA"/>
</dbReference>
<dbReference type="Proteomes" id="UP000137384">
    <property type="component" value="Segment"/>
</dbReference>
<dbReference type="GO" id="GO:0030430">
    <property type="term" value="C:host cell cytoplasm"/>
    <property type="evidence" value="ECO:0007669"/>
    <property type="project" value="UniProtKB-SubCell"/>
</dbReference>
<dbReference type="GO" id="GO:0016881">
    <property type="term" value="F:acid-amino acid ligase activity"/>
    <property type="evidence" value="ECO:0007669"/>
    <property type="project" value="InterPro"/>
</dbReference>
<dbReference type="GO" id="GO:0061630">
    <property type="term" value="F:ubiquitin protein ligase activity"/>
    <property type="evidence" value="ECO:0007669"/>
    <property type="project" value="InterPro"/>
</dbReference>
<dbReference type="GO" id="GO:0008270">
    <property type="term" value="F:zinc ion binding"/>
    <property type="evidence" value="ECO:0007669"/>
    <property type="project" value="UniProtKB-KW"/>
</dbReference>
<dbReference type="GO" id="GO:0000209">
    <property type="term" value="P:protein polyubiquitination"/>
    <property type="evidence" value="ECO:0007669"/>
    <property type="project" value="InterPro"/>
</dbReference>
<dbReference type="GO" id="GO:0052150">
    <property type="term" value="P:symbiont-mediated perturbation of host apoptosis"/>
    <property type="evidence" value="ECO:0007669"/>
    <property type="project" value="UniProtKB-KW"/>
</dbReference>
<dbReference type="GO" id="GO:0039648">
    <property type="term" value="P:symbiont-mediated perturbation of host ubiquitin-like protein modification"/>
    <property type="evidence" value="ECO:0007669"/>
    <property type="project" value="UniProtKB-KW"/>
</dbReference>
<dbReference type="Gene3D" id="3.30.40.10">
    <property type="entry name" value="Zinc/RING finger domain, C3HC4 (zinc finger)"/>
    <property type="match status" value="1"/>
</dbReference>
<dbReference type="InterPro" id="IPR016398">
    <property type="entry name" value="E3_ubiquitin-prot_ligase_p28"/>
</dbReference>
<dbReference type="InterPro" id="IPR018004">
    <property type="entry name" value="KilA/APSES_HTH"/>
</dbReference>
<dbReference type="InterPro" id="IPR017880">
    <property type="entry name" value="KilA_N"/>
</dbReference>
<dbReference type="InterPro" id="IPR045072">
    <property type="entry name" value="MKRN-like"/>
</dbReference>
<dbReference type="InterPro" id="IPR001841">
    <property type="entry name" value="Znf_RING"/>
</dbReference>
<dbReference type="InterPro" id="IPR013083">
    <property type="entry name" value="Znf_RING/FYVE/PHD"/>
</dbReference>
<dbReference type="InterPro" id="IPR017907">
    <property type="entry name" value="Znf_RING_CS"/>
</dbReference>
<dbReference type="PANTHER" id="PTHR11224:SF10">
    <property type="entry name" value="IP09428P-RELATED"/>
    <property type="match status" value="1"/>
</dbReference>
<dbReference type="PANTHER" id="PTHR11224">
    <property type="entry name" value="MAKORIN-RELATED"/>
    <property type="match status" value="1"/>
</dbReference>
<dbReference type="Pfam" id="PF04383">
    <property type="entry name" value="KilA-N"/>
    <property type="match status" value="1"/>
</dbReference>
<dbReference type="Pfam" id="PF13639">
    <property type="entry name" value="zf-RING_2"/>
    <property type="match status" value="1"/>
</dbReference>
<dbReference type="PIRSF" id="PIRSF003775">
    <property type="entry name" value="E3_ubiquit_lig_p28"/>
    <property type="match status" value="1"/>
</dbReference>
<dbReference type="SMART" id="SM00184">
    <property type="entry name" value="RING"/>
    <property type="match status" value="1"/>
</dbReference>
<dbReference type="SUPFAM" id="SSF57850">
    <property type="entry name" value="RING/U-box"/>
    <property type="match status" value="1"/>
</dbReference>
<dbReference type="PROSITE" id="PS51301">
    <property type="entry name" value="KILA_N"/>
    <property type="match status" value="1"/>
</dbReference>
<dbReference type="PROSITE" id="PS00518">
    <property type="entry name" value="ZF_RING_1"/>
    <property type="match status" value="1"/>
</dbReference>
<dbReference type="PROSITE" id="PS50089">
    <property type="entry name" value="ZF_RING_2"/>
    <property type="match status" value="1"/>
</dbReference>
<proteinExistence type="inferred from homology"/>
<gene>
    <name type="primary">OPG021</name>
    <name type="synonym">p28</name>
    <name type="ORF">C7R</name>
</gene>
<sequence length="242" mass="28570">MEFDPTKINTSSIDHVTILQYIDEPNDIRLTVCIIRNINNITYYINITKINPHLANQFRAWKKRIAGRDYMTNLSRDTGIQQSKLTETIRNCQKNRNIYGLYIHYNLVINVVIDWITDVIVQSILRGLVNWYIANNTYTPNTPNNTTTISELDIIKILDKYEDVYRVSKEKECGICYEVVYSKRLENDRYFGLLDSCNHIFCITCINIWHRTRRETGASDNCPICRTRFRNITMSKFYKLVN</sequence>